<proteinExistence type="evidence at transcript level"/>
<feature type="chain" id="PRO_0000068988" description="Adenosine receptor A1">
    <location>
        <begin position="1"/>
        <end position="326"/>
    </location>
</feature>
<feature type="topological domain" description="Extracellular" evidence="1">
    <location>
        <begin position="1"/>
        <end position="10"/>
    </location>
</feature>
<feature type="transmembrane region" description="Helical; Name=1" evidence="1">
    <location>
        <begin position="11"/>
        <end position="33"/>
    </location>
</feature>
<feature type="topological domain" description="Cytoplasmic" evidence="1">
    <location>
        <begin position="34"/>
        <end position="46"/>
    </location>
</feature>
<feature type="transmembrane region" description="Helical; Name=2" evidence="1">
    <location>
        <begin position="47"/>
        <end position="69"/>
    </location>
</feature>
<feature type="topological domain" description="Extracellular" evidence="1">
    <location>
        <begin position="70"/>
        <end position="80"/>
    </location>
</feature>
<feature type="transmembrane region" description="Helical; Name=3" evidence="1">
    <location>
        <begin position="81"/>
        <end position="102"/>
    </location>
</feature>
<feature type="topological domain" description="Cytoplasmic" evidence="1">
    <location>
        <begin position="103"/>
        <end position="123"/>
    </location>
</feature>
<feature type="transmembrane region" description="Helical; Name=4" evidence="1">
    <location>
        <begin position="124"/>
        <end position="146"/>
    </location>
</feature>
<feature type="topological domain" description="Extracellular" evidence="1">
    <location>
        <begin position="147"/>
        <end position="176"/>
    </location>
</feature>
<feature type="transmembrane region" description="Helical; Name=5" evidence="1">
    <location>
        <begin position="177"/>
        <end position="201"/>
    </location>
</feature>
<feature type="topological domain" description="Cytoplasmic" evidence="1">
    <location>
        <begin position="202"/>
        <end position="235"/>
    </location>
</feature>
<feature type="transmembrane region" description="Helical; Name=6" evidence="1">
    <location>
        <begin position="236"/>
        <end position="259"/>
    </location>
</feature>
<feature type="topological domain" description="Extracellular" evidence="1">
    <location>
        <begin position="260"/>
        <end position="267"/>
    </location>
</feature>
<feature type="transmembrane region" description="Helical; Name=7" evidence="1">
    <location>
        <begin position="268"/>
        <end position="292"/>
    </location>
</feature>
<feature type="topological domain" description="Cytoplasmic" evidence="1">
    <location>
        <begin position="293"/>
        <end position="326"/>
    </location>
</feature>
<feature type="lipid moiety-binding region" description="S-palmitoyl cysteine" evidence="1">
    <location>
        <position position="309"/>
    </location>
</feature>
<feature type="glycosylation site" description="N-linked (GlcNAc...) asparagine" evidence="1">
    <location>
        <position position="148"/>
    </location>
</feature>
<feature type="glycosylation site" description="N-linked (GlcNAc...) asparagine" evidence="1">
    <location>
        <position position="159"/>
    </location>
</feature>
<feature type="disulfide bond" evidence="2">
    <location>
        <begin position="80"/>
        <end position="169"/>
    </location>
</feature>
<feature type="sequence conflict" description="In Ref. 1; CAA45135 and 2; AAA30350." evidence="3" ref="1 2">
    <original>N</original>
    <variation>S</variation>
    <location>
        <position position="212"/>
    </location>
</feature>
<feature type="sequence conflict" description="In Ref. 1; CAA45135 and 2; AAA30350." evidence="3" ref="1 2">
    <original>V</original>
    <variation>I</variation>
    <location>
        <position position="315"/>
    </location>
</feature>
<gene>
    <name type="primary">ADORA1</name>
</gene>
<name>AA1R_BOVIN</name>
<protein>
    <recommendedName>
        <fullName>Adenosine receptor A1</fullName>
    </recommendedName>
</protein>
<keyword id="KW-1003">Cell membrane</keyword>
<keyword id="KW-1015">Disulfide bond</keyword>
<keyword id="KW-0297">G-protein coupled receptor</keyword>
<keyword id="KW-0325">Glycoprotein</keyword>
<keyword id="KW-0449">Lipoprotein</keyword>
<keyword id="KW-0472">Membrane</keyword>
<keyword id="KW-0564">Palmitate</keyword>
<keyword id="KW-0675">Receptor</keyword>
<keyword id="KW-1185">Reference proteome</keyword>
<keyword id="KW-0807">Transducer</keyword>
<keyword id="KW-0812">Transmembrane</keyword>
<keyword id="KW-1133">Transmembrane helix</keyword>
<reference key="1">
    <citation type="journal article" date="1992" name="FEBS Lett.">
        <title>Cloning and expression of a bovine adenosine A1 receptor cDNA.</title>
        <authorList>
            <person name="Tucker A.L."/>
            <person name="Linden J."/>
            <person name="Robeva A.S."/>
            <person name="D'Angelo D.D."/>
            <person name="Lynch K.R."/>
        </authorList>
    </citation>
    <scope>NUCLEOTIDE SEQUENCE [MRNA]</scope>
    <source>
        <tissue>Brain</tissue>
    </source>
</reference>
<reference key="2">
    <citation type="journal article" date="1992" name="J. Biol. Chem.">
        <title>Cloning, expression, and characterization of the unique bovine A1 adenosine receptor. Studies on the ligand binding site by site-directed mutagenesis.</title>
        <authorList>
            <person name="Olah M.E."/>
            <person name="Ren H."/>
            <person name="Ostrowski J."/>
            <person name="Jacobson K."/>
            <person name="Stiles G.L."/>
        </authorList>
    </citation>
    <scope>NUCLEOTIDE SEQUENCE [MRNA]</scope>
</reference>
<reference key="3">
    <citation type="journal article" date="2005" name="BMC Genomics">
        <title>Characterization of 954 bovine full-CDS cDNA sequences.</title>
        <authorList>
            <person name="Harhay G.P."/>
            <person name="Sonstegard T.S."/>
            <person name="Keele J.W."/>
            <person name="Heaton M.P."/>
            <person name="Clawson M.L."/>
            <person name="Snelling W.M."/>
            <person name="Wiedmann R.T."/>
            <person name="Van Tassell C.P."/>
            <person name="Smith T.P.L."/>
        </authorList>
    </citation>
    <scope>NUCLEOTIDE SEQUENCE [LARGE SCALE MRNA]</scope>
</reference>
<reference key="4">
    <citation type="submission" date="2007-06" db="EMBL/GenBank/DDBJ databases">
        <authorList>
            <consortium name="NIH - Mammalian Gene Collection (MGC) project"/>
        </authorList>
    </citation>
    <scope>NUCLEOTIDE SEQUENCE [LARGE SCALE MRNA]</scope>
    <source>
        <strain>Hereford</strain>
        <tissue>Fetal pons</tissue>
        <tissue>Hippocampus</tissue>
    </source>
</reference>
<accession>P28190</accession>
<accession>A5PJR1</accession>
<accession>Q58D38</accession>
<organism>
    <name type="scientific">Bos taurus</name>
    <name type="common">Bovine</name>
    <dbReference type="NCBI Taxonomy" id="9913"/>
    <lineage>
        <taxon>Eukaryota</taxon>
        <taxon>Metazoa</taxon>
        <taxon>Chordata</taxon>
        <taxon>Craniata</taxon>
        <taxon>Vertebrata</taxon>
        <taxon>Euteleostomi</taxon>
        <taxon>Mammalia</taxon>
        <taxon>Eutheria</taxon>
        <taxon>Laurasiatheria</taxon>
        <taxon>Artiodactyla</taxon>
        <taxon>Ruminantia</taxon>
        <taxon>Pecora</taxon>
        <taxon>Bovidae</taxon>
        <taxon>Bovinae</taxon>
        <taxon>Bos</taxon>
    </lineage>
</organism>
<dbReference type="EMBL" id="X63592">
    <property type="protein sequence ID" value="CAA45135.1"/>
    <property type="molecule type" value="mRNA"/>
</dbReference>
<dbReference type="EMBL" id="M86261">
    <property type="protein sequence ID" value="AAA30350.1"/>
    <property type="molecule type" value="mRNA"/>
</dbReference>
<dbReference type="EMBL" id="BT021759">
    <property type="protein sequence ID" value="AAX46606.1"/>
    <property type="molecule type" value="mRNA"/>
</dbReference>
<dbReference type="EMBL" id="BC142208">
    <property type="protein sequence ID" value="AAI42209.1"/>
    <property type="molecule type" value="mRNA"/>
</dbReference>
<dbReference type="EMBL" id="BC142265">
    <property type="protein sequence ID" value="AAI42266.1"/>
    <property type="molecule type" value="mRNA"/>
</dbReference>
<dbReference type="PIR" id="A38144">
    <property type="entry name" value="A38144"/>
</dbReference>
<dbReference type="RefSeq" id="NP_776922.2">
    <property type="nucleotide sequence ID" value="NM_174497.3"/>
</dbReference>
<dbReference type="RefSeq" id="XP_005216709.1">
    <property type="nucleotide sequence ID" value="XM_005216652.3"/>
</dbReference>
<dbReference type="RefSeq" id="XP_005216710.1">
    <property type="nucleotide sequence ID" value="XM_005216653.5"/>
</dbReference>
<dbReference type="RefSeq" id="XP_010811315.1">
    <property type="nucleotide sequence ID" value="XM_010813013.2"/>
</dbReference>
<dbReference type="SMR" id="P28190"/>
<dbReference type="FunCoup" id="P28190">
    <property type="interactions" value="590"/>
</dbReference>
<dbReference type="STRING" id="9913.ENSBTAP00000015230"/>
<dbReference type="BindingDB" id="P28190"/>
<dbReference type="ChEMBL" id="CHEMBL4975"/>
<dbReference type="DrugCentral" id="P28190"/>
<dbReference type="GlyCosmos" id="P28190">
    <property type="glycosylation" value="2 sites, No reported glycans"/>
</dbReference>
<dbReference type="GlyGen" id="P28190">
    <property type="glycosylation" value="2 sites"/>
</dbReference>
<dbReference type="PaxDb" id="9913-ENSBTAP00000015230"/>
<dbReference type="Ensembl" id="ENSBTAT00000072690.2">
    <property type="protein sequence ID" value="ENSBTAP00000071730.1"/>
    <property type="gene ID" value="ENSBTAG00000011461.6"/>
</dbReference>
<dbReference type="GeneID" id="282133"/>
<dbReference type="KEGG" id="bta:282133"/>
<dbReference type="CTD" id="134"/>
<dbReference type="VEuPathDB" id="HostDB:ENSBTAG00000011461"/>
<dbReference type="VGNC" id="VGNC:25686">
    <property type="gene designation" value="ADORA1"/>
</dbReference>
<dbReference type="eggNOG" id="KOG3656">
    <property type="taxonomic scope" value="Eukaryota"/>
</dbReference>
<dbReference type="GeneTree" id="ENSGT01030000234555"/>
<dbReference type="HOGENOM" id="CLU_009579_11_5_1"/>
<dbReference type="InParanoid" id="P28190"/>
<dbReference type="OMA" id="FCCKDTP"/>
<dbReference type="OrthoDB" id="5984709at2759"/>
<dbReference type="TreeFam" id="TF325296"/>
<dbReference type="Reactome" id="R-BTA-417973">
    <property type="pathway name" value="Adenosine P1 receptors"/>
</dbReference>
<dbReference type="Reactome" id="R-BTA-418594">
    <property type="pathway name" value="G alpha (i) signalling events"/>
</dbReference>
<dbReference type="PRO" id="PR:P28190"/>
<dbReference type="Proteomes" id="UP000009136">
    <property type="component" value="Chromosome 16"/>
</dbReference>
<dbReference type="Bgee" id="ENSBTAG00000011461">
    <property type="expression patterns" value="Expressed in pons and 76 other cell types or tissues"/>
</dbReference>
<dbReference type="GO" id="GO:0005929">
    <property type="term" value="C:cilium"/>
    <property type="evidence" value="ECO:0007669"/>
    <property type="project" value="Ensembl"/>
</dbReference>
<dbReference type="GO" id="GO:0030425">
    <property type="term" value="C:dendrite"/>
    <property type="evidence" value="ECO:0000318"/>
    <property type="project" value="GO_Central"/>
</dbReference>
<dbReference type="GO" id="GO:0043197">
    <property type="term" value="C:dendritic spine"/>
    <property type="evidence" value="ECO:0007669"/>
    <property type="project" value="Ensembl"/>
</dbReference>
<dbReference type="GO" id="GO:0005886">
    <property type="term" value="C:plasma membrane"/>
    <property type="evidence" value="ECO:0000318"/>
    <property type="project" value="GO_Central"/>
</dbReference>
<dbReference type="GO" id="GO:0045202">
    <property type="term" value="C:synapse"/>
    <property type="evidence" value="ECO:0000318"/>
    <property type="project" value="GO_Central"/>
</dbReference>
<dbReference type="GO" id="GO:0001609">
    <property type="term" value="F:G protein-coupled adenosine receptor activity"/>
    <property type="evidence" value="ECO:0000318"/>
    <property type="project" value="GO_Central"/>
</dbReference>
<dbReference type="GO" id="GO:0060079">
    <property type="term" value="P:excitatory postsynaptic potential"/>
    <property type="evidence" value="ECO:0007669"/>
    <property type="project" value="Ensembl"/>
</dbReference>
<dbReference type="GO" id="GO:0007186">
    <property type="term" value="P:G protein-coupled receptor signaling pathway"/>
    <property type="evidence" value="ECO:0000318"/>
    <property type="project" value="GO_Central"/>
</dbReference>
<dbReference type="GO" id="GO:0050900">
    <property type="term" value="P:leukocyte migration"/>
    <property type="evidence" value="ECO:0007669"/>
    <property type="project" value="Ensembl"/>
</dbReference>
<dbReference type="GO" id="GO:0060292">
    <property type="term" value="P:long-term synaptic depression"/>
    <property type="evidence" value="ECO:0007669"/>
    <property type="project" value="Ensembl"/>
</dbReference>
<dbReference type="GO" id="GO:0070254">
    <property type="term" value="P:mucus secretion"/>
    <property type="evidence" value="ECO:0007669"/>
    <property type="project" value="Ensembl"/>
</dbReference>
<dbReference type="GO" id="GO:0050728">
    <property type="term" value="P:negative regulation of inflammatory response"/>
    <property type="evidence" value="ECO:0007669"/>
    <property type="project" value="Ensembl"/>
</dbReference>
<dbReference type="GO" id="GO:0002686">
    <property type="term" value="P:negative regulation of leukocyte migration"/>
    <property type="evidence" value="ECO:0007669"/>
    <property type="project" value="Ensembl"/>
</dbReference>
<dbReference type="GO" id="GO:1900453">
    <property type="term" value="P:negative regulation of long-term synaptic depression"/>
    <property type="evidence" value="ECO:0007669"/>
    <property type="project" value="Ensembl"/>
</dbReference>
<dbReference type="GO" id="GO:0070256">
    <property type="term" value="P:negative regulation of mucus secretion"/>
    <property type="evidence" value="ECO:0007669"/>
    <property type="project" value="Ensembl"/>
</dbReference>
<dbReference type="GO" id="GO:0003093">
    <property type="term" value="P:regulation of glomerular filtration"/>
    <property type="evidence" value="ECO:0007669"/>
    <property type="project" value="Ensembl"/>
</dbReference>
<dbReference type="GO" id="GO:0051930">
    <property type="term" value="P:regulation of sensory perception of pain"/>
    <property type="evidence" value="ECO:0007669"/>
    <property type="project" value="Ensembl"/>
</dbReference>
<dbReference type="GO" id="GO:0014074">
    <property type="term" value="P:response to purine-containing compound"/>
    <property type="evidence" value="ECO:0007669"/>
    <property type="project" value="Ensembl"/>
</dbReference>
<dbReference type="CDD" id="cd15071">
    <property type="entry name" value="7tmA_Adenosine_R_A1"/>
    <property type="match status" value="1"/>
</dbReference>
<dbReference type="FunFam" id="1.20.1070.10:FF:000061">
    <property type="entry name" value="Adenosine receptor A2"/>
    <property type="match status" value="1"/>
</dbReference>
<dbReference type="Gene3D" id="1.20.1070.10">
    <property type="entry name" value="Rhodopsin 7-helix transmembrane proteins"/>
    <property type="match status" value="1"/>
</dbReference>
<dbReference type="InterPro" id="IPR001068">
    <property type="entry name" value="Adeno_A1_rcpt"/>
</dbReference>
<dbReference type="InterPro" id="IPR001634">
    <property type="entry name" value="Adenosn_rcpt"/>
</dbReference>
<dbReference type="InterPro" id="IPR000276">
    <property type="entry name" value="GPCR_Rhodpsn"/>
</dbReference>
<dbReference type="InterPro" id="IPR017452">
    <property type="entry name" value="GPCR_Rhodpsn_7TM"/>
</dbReference>
<dbReference type="PANTHER" id="PTHR24246:SF1">
    <property type="entry name" value="ADENOSINE RECEPTOR A1"/>
    <property type="match status" value="1"/>
</dbReference>
<dbReference type="PANTHER" id="PTHR24246">
    <property type="entry name" value="OLFACTORY RECEPTOR AND ADENOSINE RECEPTOR"/>
    <property type="match status" value="1"/>
</dbReference>
<dbReference type="Pfam" id="PF00001">
    <property type="entry name" value="7tm_1"/>
    <property type="match status" value="1"/>
</dbReference>
<dbReference type="PRINTS" id="PR00552">
    <property type="entry name" value="ADENOSINEA1R"/>
</dbReference>
<dbReference type="PRINTS" id="PR00424">
    <property type="entry name" value="ADENOSINER"/>
</dbReference>
<dbReference type="PRINTS" id="PR00237">
    <property type="entry name" value="GPCRRHODOPSN"/>
</dbReference>
<dbReference type="SMART" id="SM01381">
    <property type="entry name" value="7TM_GPCR_Srsx"/>
    <property type="match status" value="1"/>
</dbReference>
<dbReference type="SUPFAM" id="SSF81321">
    <property type="entry name" value="Family A G protein-coupled receptor-like"/>
    <property type="match status" value="1"/>
</dbReference>
<dbReference type="PROSITE" id="PS00237">
    <property type="entry name" value="G_PROTEIN_RECEP_F1_1"/>
    <property type="match status" value="1"/>
</dbReference>
<dbReference type="PROSITE" id="PS50262">
    <property type="entry name" value="G_PROTEIN_RECEP_F1_2"/>
    <property type="match status" value="1"/>
</dbReference>
<sequence length="326" mass="36593">MPPSISAFQAAYIGIEVLIALVSVPGNVLVIWAVKVNQALRDATFCFIVSLAVADVAVGALVIPLAILINIGPRTYFHTCLKVACPVLILTQSSILALLAIAVDRYLRVKIPLRYKTVVTPRRAVVAITGCWILSFVVGLTPMFGWNNLSAVERDWLANGSVGEPVIECQFEKVISMEYMVYFNFFVWVLPPLLLMVLIYMEVFYLIRKQLNKKVSASSGDPQKYYGKELKIAKSLALILFLFALSWLPLHILNCITLFCPSCHMPRILIYIAIFLSHGNSAMNPIVYAFRIQKFRVTFLKIWNDHFRCQPAPPVDEDAPAERPDD</sequence>
<evidence type="ECO:0000255" key="1"/>
<evidence type="ECO:0000255" key="2">
    <source>
        <dbReference type="PROSITE-ProRule" id="PRU00521"/>
    </source>
</evidence>
<evidence type="ECO:0000305" key="3"/>
<comment type="function">
    <text>Receptor for adenosine. The activity of this receptor is mediated by G proteins which inhibit adenylyl cyclase.</text>
</comment>
<comment type="subcellular location">
    <subcellularLocation>
        <location>Cell membrane</location>
        <topology>Multi-pass membrane protein</topology>
    </subcellularLocation>
</comment>
<comment type="similarity">
    <text evidence="2">Belongs to the G-protein coupled receptor 1 family.</text>
</comment>